<evidence type="ECO:0000255" key="1">
    <source>
        <dbReference type="HAMAP-Rule" id="MF_01393"/>
    </source>
</evidence>
<keyword id="KW-0066">ATP synthesis</keyword>
<keyword id="KW-0138">CF(0)</keyword>
<keyword id="KW-0150">Chloroplast</keyword>
<keyword id="KW-0375">Hydrogen ion transport</keyword>
<keyword id="KW-0406">Ion transport</keyword>
<keyword id="KW-0472">Membrane</keyword>
<keyword id="KW-0934">Plastid</keyword>
<keyword id="KW-0793">Thylakoid</keyword>
<keyword id="KW-0812">Transmembrane</keyword>
<keyword id="KW-1133">Transmembrane helix</keyword>
<keyword id="KW-0813">Transport</keyword>
<feature type="chain" id="PRO_0000362550" description="ATP synthase subunit a, chloroplastic">
    <location>
        <begin position="1"/>
        <end position="248"/>
    </location>
</feature>
<feature type="transmembrane region" description="Helical" evidence="1">
    <location>
        <begin position="38"/>
        <end position="58"/>
    </location>
</feature>
<feature type="transmembrane region" description="Helical" evidence="1">
    <location>
        <begin position="96"/>
        <end position="116"/>
    </location>
</feature>
<feature type="transmembrane region" description="Helical" evidence="1">
    <location>
        <begin position="135"/>
        <end position="155"/>
    </location>
</feature>
<feature type="transmembrane region" description="Helical" evidence="1">
    <location>
        <begin position="200"/>
        <end position="220"/>
    </location>
</feature>
<feature type="transmembrane region" description="Helical" evidence="1">
    <location>
        <begin position="221"/>
        <end position="241"/>
    </location>
</feature>
<comment type="function">
    <text evidence="1">Key component of the proton channel; it plays a direct role in the translocation of protons across the membrane.</text>
</comment>
<comment type="subunit">
    <text evidence="1">F-type ATPases have 2 components, CF(1) - the catalytic core - and CF(0) - the membrane proton channel. CF(1) has five subunits: alpha(3), beta(3), gamma(1), delta(1), epsilon(1). CF(0) has four main subunits: a, b, b' and c.</text>
</comment>
<comment type="subcellular location">
    <subcellularLocation>
        <location evidence="1">Plastid</location>
        <location evidence="1">Chloroplast thylakoid membrane</location>
        <topology evidence="1">Multi-pass membrane protein</topology>
    </subcellularLocation>
</comment>
<comment type="similarity">
    <text evidence="1">Belongs to the ATPase A chain family.</text>
</comment>
<reference key="1">
    <citation type="journal article" date="2007" name="Mol. Biol. Evol.">
        <title>Chloroplast genome (cpDNA) of Cycas taitungensis and 56 cp protein-coding genes of Gnetum parvifolium: insights into cpDNA evolution and phylogeny of extant seed plants.</title>
        <authorList>
            <person name="Wu C.-S."/>
            <person name="Wang Y.-N."/>
            <person name="Liu S.-M."/>
            <person name="Chaw S.-M."/>
        </authorList>
    </citation>
    <scope>NUCLEOTIDE SEQUENCE [LARGE SCALE GENOMIC DNA]</scope>
</reference>
<gene>
    <name evidence="1" type="primary">atpI</name>
</gene>
<proteinExistence type="inferred from homology"/>
<organism>
    <name type="scientific">Cycas taitungensis</name>
    <name type="common">Prince sago</name>
    <name type="synonym">Cycas taiwaniana</name>
    <dbReference type="NCBI Taxonomy" id="54799"/>
    <lineage>
        <taxon>Eukaryota</taxon>
        <taxon>Viridiplantae</taxon>
        <taxon>Streptophyta</taxon>
        <taxon>Embryophyta</taxon>
        <taxon>Tracheophyta</taxon>
        <taxon>Spermatophyta</taxon>
        <taxon>Cycadidae</taxon>
        <taxon>Cycadales</taxon>
        <taxon>Cycadaceae</taxon>
        <taxon>Cycas</taxon>
    </lineage>
</organism>
<name>ATPI_CYCTA</name>
<sequence length="248" mass="27138">MDIVQSSIDTLNHFYEISGVEVGQHFYWQIGGFKVHAQVLITSWVVIAVLLGSATIAVRDPQTIPTGGQNFVEYVLGFVRDLTRTQIGEEEYGPWVPFIGTMFLFILVSNWSGALLPWKIIQLPHGELAAPTNDINTTVALALLTSVAYFYAGLAKKGLGYFGKYIQPTPVLLPINILEDFTKPLSLSFRLFGNILADELVVAVLVSLVPLVVPIPVMFLGLFTSAIQALIFATLAAAYIGESMEGHH</sequence>
<geneLocation type="chloroplast"/>
<protein>
    <recommendedName>
        <fullName evidence="1">ATP synthase subunit a, chloroplastic</fullName>
    </recommendedName>
    <alternativeName>
        <fullName evidence="1">ATP synthase F0 sector subunit a</fullName>
    </alternativeName>
    <alternativeName>
        <fullName evidence="1">F-ATPase subunit IV</fullName>
    </alternativeName>
</protein>
<dbReference type="EMBL" id="AP009339">
    <property type="protein sequence ID" value="BAF64921.1"/>
    <property type="molecule type" value="Genomic_DNA"/>
</dbReference>
<dbReference type="RefSeq" id="YP_001312180.1">
    <property type="nucleotide sequence ID" value="NC_009618.1"/>
</dbReference>
<dbReference type="SMR" id="A6H5F5"/>
<dbReference type="GeneID" id="5309532"/>
<dbReference type="GO" id="GO:0009535">
    <property type="term" value="C:chloroplast thylakoid membrane"/>
    <property type="evidence" value="ECO:0007669"/>
    <property type="project" value="UniProtKB-SubCell"/>
</dbReference>
<dbReference type="GO" id="GO:0005886">
    <property type="term" value="C:plasma membrane"/>
    <property type="evidence" value="ECO:0007669"/>
    <property type="project" value="UniProtKB-UniRule"/>
</dbReference>
<dbReference type="GO" id="GO:0045259">
    <property type="term" value="C:proton-transporting ATP synthase complex"/>
    <property type="evidence" value="ECO:0007669"/>
    <property type="project" value="UniProtKB-KW"/>
</dbReference>
<dbReference type="GO" id="GO:0046933">
    <property type="term" value="F:proton-transporting ATP synthase activity, rotational mechanism"/>
    <property type="evidence" value="ECO:0007669"/>
    <property type="project" value="UniProtKB-UniRule"/>
</dbReference>
<dbReference type="CDD" id="cd00310">
    <property type="entry name" value="ATP-synt_Fo_a_6"/>
    <property type="match status" value="1"/>
</dbReference>
<dbReference type="FunFam" id="1.20.120.220:FF:000001">
    <property type="entry name" value="ATP synthase subunit a, chloroplastic"/>
    <property type="match status" value="1"/>
</dbReference>
<dbReference type="Gene3D" id="1.20.120.220">
    <property type="entry name" value="ATP synthase, F0 complex, subunit A"/>
    <property type="match status" value="1"/>
</dbReference>
<dbReference type="HAMAP" id="MF_01393">
    <property type="entry name" value="ATP_synth_a_bact"/>
    <property type="match status" value="1"/>
</dbReference>
<dbReference type="InterPro" id="IPR045082">
    <property type="entry name" value="ATP_syn_F0_a_bact/chloroplast"/>
</dbReference>
<dbReference type="InterPro" id="IPR000568">
    <property type="entry name" value="ATP_synth_F0_asu"/>
</dbReference>
<dbReference type="InterPro" id="IPR023011">
    <property type="entry name" value="ATP_synth_F0_asu_AS"/>
</dbReference>
<dbReference type="InterPro" id="IPR035908">
    <property type="entry name" value="F0_ATP_A_sf"/>
</dbReference>
<dbReference type="NCBIfam" id="TIGR01131">
    <property type="entry name" value="ATP_synt_6_or_A"/>
    <property type="match status" value="1"/>
</dbReference>
<dbReference type="PANTHER" id="PTHR42823">
    <property type="entry name" value="ATP SYNTHASE SUBUNIT A, CHLOROPLASTIC"/>
    <property type="match status" value="1"/>
</dbReference>
<dbReference type="PANTHER" id="PTHR42823:SF3">
    <property type="entry name" value="ATP SYNTHASE SUBUNIT A, CHLOROPLASTIC"/>
    <property type="match status" value="1"/>
</dbReference>
<dbReference type="Pfam" id="PF00119">
    <property type="entry name" value="ATP-synt_A"/>
    <property type="match status" value="1"/>
</dbReference>
<dbReference type="PRINTS" id="PR00123">
    <property type="entry name" value="ATPASEA"/>
</dbReference>
<dbReference type="SUPFAM" id="SSF81336">
    <property type="entry name" value="F1F0 ATP synthase subunit A"/>
    <property type="match status" value="1"/>
</dbReference>
<dbReference type="PROSITE" id="PS00449">
    <property type="entry name" value="ATPASE_A"/>
    <property type="match status" value="1"/>
</dbReference>
<accession>A6H5F5</accession>